<feature type="chain" id="PRO_1000136305" description="UPF0231 protein YacL">
    <location>
        <begin position="1"/>
        <end position="120"/>
    </location>
</feature>
<evidence type="ECO:0000255" key="1">
    <source>
        <dbReference type="HAMAP-Rule" id="MF_01053"/>
    </source>
</evidence>
<comment type="similarity">
    <text evidence="1">Belongs to the UPF0231 family.</text>
</comment>
<gene>
    <name evidence="1" type="primary">yacL</name>
    <name type="ordered locus">SeHA_C0183</name>
</gene>
<protein>
    <recommendedName>
        <fullName evidence="1">UPF0231 protein YacL</fullName>
    </recommendedName>
</protein>
<name>YACL_SALHS</name>
<reference key="1">
    <citation type="journal article" date="2011" name="J. Bacteriol.">
        <title>Comparative genomics of 28 Salmonella enterica isolates: evidence for CRISPR-mediated adaptive sublineage evolution.</title>
        <authorList>
            <person name="Fricke W.F."/>
            <person name="Mammel M.K."/>
            <person name="McDermott P.F."/>
            <person name="Tartera C."/>
            <person name="White D.G."/>
            <person name="Leclerc J.E."/>
            <person name="Ravel J."/>
            <person name="Cebula T.A."/>
        </authorList>
    </citation>
    <scope>NUCLEOTIDE SEQUENCE [LARGE SCALE GENOMIC DNA]</scope>
    <source>
        <strain>SL476</strain>
    </source>
</reference>
<dbReference type="EMBL" id="CP001120">
    <property type="protein sequence ID" value="ACF70116.1"/>
    <property type="molecule type" value="Genomic_DNA"/>
</dbReference>
<dbReference type="RefSeq" id="WP_000384309.1">
    <property type="nucleotide sequence ID" value="NC_011083.1"/>
</dbReference>
<dbReference type="SMR" id="B4TJC7"/>
<dbReference type="KEGG" id="seh:SeHA_C0183"/>
<dbReference type="HOGENOM" id="CLU_139226_0_0_6"/>
<dbReference type="Proteomes" id="UP000001866">
    <property type="component" value="Chromosome"/>
</dbReference>
<dbReference type="HAMAP" id="MF_01053">
    <property type="entry name" value="UPF0231"/>
    <property type="match status" value="1"/>
</dbReference>
<dbReference type="InterPro" id="IPR008249">
    <property type="entry name" value="UPF0231"/>
</dbReference>
<dbReference type="NCBIfam" id="NF003574">
    <property type="entry name" value="PRK05248.1-1"/>
    <property type="match status" value="1"/>
</dbReference>
<dbReference type="NCBIfam" id="NF003576">
    <property type="entry name" value="PRK05248.1-3"/>
    <property type="match status" value="1"/>
</dbReference>
<dbReference type="Pfam" id="PF06062">
    <property type="entry name" value="UPF0231"/>
    <property type="match status" value="1"/>
</dbReference>
<dbReference type="PIRSF" id="PIRSF006287">
    <property type="entry name" value="UCP006287"/>
    <property type="match status" value="1"/>
</dbReference>
<sequence>MDYEFLRDVTGGVKVRMSMGHEVVGHWFNEEVKDNLSLLDEVEQAARTVKGSERSWQRAGHEYTIWMDGEEVMIRANQLDFSGDEMEEGMSYYNEESLSLCGMEDFLRVVAAYREFVSKA</sequence>
<organism>
    <name type="scientific">Salmonella heidelberg (strain SL476)</name>
    <dbReference type="NCBI Taxonomy" id="454169"/>
    <lineage>
        <taxon>Bacteria</taxon>
        <taxon>Pseudomonadati</taxon>
        <taxon>Pseudomonadota</taxon>
        <taxon>Gammaproteobacteria</taxon>
        <taxon>Enterobacterales</taxon>
        <taxon>Enterobacteriaceae</taxon>
        <taxon>Salmonella</taxon>
    </lineage>
</organism>
<accession>B4TJC7</accession>
<proteinExistence type="inferred from homology"/>